<keyword id="KW-0162">Chylomicron</keyword>
<keyword id="KW-0967">Endosome</keyword>
<keyword id="KW-0272">Extracellular matrix</keyword>
<keyword id="KW-0325">Glycoprotein</keyword>
<keyword id="KW-0345">HDL</keyword>
<keyword id="KW-0358">Heparin-binding</keyword>
<keyword id="KW-0446">Lipid-binding</keyword>
<keyword id="KW-0558">Oxidation</keyword>
<keyword id="KW-0597">Phosphoprotein</keyword>
<keyword id="KW-1185">Reference proteome</keyword>
<keyword id="KW-0677">Repeat</keyword>
<keyword id="KW-0964">Secreted</keyword>
<keyword id="KW-0732">Signal</keyword>
<keyword id="KW-0850">VLDL</keyword>
<dbReference type="EMBL" id="NINY01000000">
    <property type="status" value="NOT_ANNOTATED_CDS"/>
    <property type="molecule type" value="Genomic_DNA"/>
</dbReference>
<dbReference type="RefSeq" id="XP_021536999.1">
    <property type="nucleotide sequence ID" value="XM_021681324.2"/>
</dbReference>
<dbReference type="RefSeq" id="XP_044778206.1">
    <property type="nucleotide sequence ID" value="XM_044922271.1"/>
</dbReference>
<dbReference type="SMR" id="A0A2Y9GHM3"/>
<dbReference type="FunCoup" id="A0A2Y9GHM3">
    <property type="interactions" value="3"/>
</dbReference>
<dbReference type="GeneID" id="110572906"/>
<dbReference type="InParanoid" id="A0A2Y9GHM3"/>
<dbReference type="Proteomes" id="UP000248481">
    <property type="component" value="Chromosome 16"/>
</dbReference>
<dbReference type="GO" id="GO:0042627">
    <property type="term" value="C:chylomicron"/>
    <property type="evidence" value="ECO:0007669"/>
    <property type="project" value="UniProtKB-KW"/>
</dbReference>
<dbReference type="GO" id="GO:0070062">
    <property type="term" value="C:extracellular exosome"/>
    <property type="evidence" value="ECO:0000250"/>
    <property type="project" value="UniProtKB"/>
</dbReference>
<dbReference type="GO" id="GO:0034364">
    <property type="term" value="C:high-density lipoprotein particle"/>
    <property type="evidence" value="ECO:0007669"/>
    <property type="project" value="UniProtKB-KW"/>
</dbReference>
<dbReference type="GO" id="GO:0034362">
    <property type="term" value="C:low-density lipoprotein particle"/>
    <property type="evidence" value="ECO:0007669"/>
    <property type="project" value="TreeGrafter"/>
</dbReference>
<dbReference type="GO" id="GO:0097487">
    <property type="term" value="C:multivesicular body, internal vesicle"/>
    <property type="evidence" value="ECO:0000250"/>
    <property type="project" value="UniProtKB"/>
</dbReference>
<dbReference type="GO" id="GO:0034361">
    <property type="term" value="C:very-low-density lipoprotein particle"/>
    <property type="evidence" value="ECO:0007669"/>
    <property type="project" value="UniProtKB-KW"/>
</dbReference>
<dbReference type="GO" id="GO:0120020">
    <property type="term" value="F:cholesterol transfer activity"/>
    <property type="evidence" value="ECO:0007669"/>
    <property type="project" value="TreeGrafter"/>
</dbReference>
<dbReference type="GO" id="GO:0008201">
    <property type="term" value="F:heparin binding"/>
    <property type="evidence" value="ECO:0007669"/>
    <property type="project" value="UniProtKB-KW"/>
</dbReference>
<dbReference type="GO" id="GO:0060228">
    <property type="term" value="F:phosphatidylcholine-sterol O-acyltransferase activator activity"/>
    <property type="evidence" value="ECO:0007669"/>
    <property type="project" value="TreeGrafter"/>
</dbReference>
<dbReference type="GO" id="GO:0005543">
    <property type="term" value="F:phospholipid binding"/>
    <property type="evidence" value="ECO:0007669"/>
    <property type="project" value="TreeGrafter"/>
</dbReference>
<dbReference type="GO" id="GO:0055090">
    <property type="term" value="P:acylglycerol homeostasis"/>
    <property type="evidence" value="ECO:0007669"/>
    <property type="project" value="TreeGrafter"/>
</dbReference>
<dbReference type="GO" id="GO:0033344">
    <property type="term" value="P:cholesterol efflux"/>
    <property type="evidence" value="ECO:0007669"/>
    <property type="project" value="TreeGrafter"/>
</dbReference>
<dbReference type="GO" id="GO:0008203">
    <property type="term" value="P:cholesterol metabolic process"/>
    <property type="evidence" value="ECO:0007669"/>
    <property type="project" value="TreeGrafter"/>
</dbReference>
<dbReference type="GO" id="GO:0042157">
    <property type="term" value="P:lipoprotein metabolic process"/>
    <property type="evidence" value="ECO:0007669"/>
    <property type="project" value="InterPro"/>
</dbReference>
<dbReference type="GO" id="GO:0032438">
    <property type="term" value="P:melanosome organization"/>
    <property type="evidence" value="ECO:0000250"/>
    <property type="project" value="UniProtKB"/>
</dbReference>
<dbReference type="GO" id="GO:0033700">
    <property type="term" value="P:phospholipid efflux"/>
    <property type="evidence" value="ECO:0007669"/>
    <property type="project" value="TreeGrafter"/>
</dbReference>
<dbReference type="FunFam" id="1.20.120.20:FF:000002">
    <property type="entry name" value="Apolipoprotein E"/>
    <property type="match status" value="1"/>
</dbReference>
<dbReference type="FunFam" id="1.20.120.20:FF:000003">
    <property type="entry name" value="Apolipoprotein E"/>
    <property type="match status" value="1"/>
</dbReference>
<dbReference type="Gene3D" id="1.20.120.20">
    <property type="entry name" value="Apolipoprotein"/>
    <property type="match status" value="2"/>
</dbReference>
<dbReference type="InterPro" id="IPR000074">
    <property type="entry name" value="ApoA_E"/>
</dbReference>
<dbReference type="InterPro" id="IPR050163">
    <property type="entry name" value="Apolipoprotein_A1/A4/E"/>
</dbReference>
<dbReference type="PANTHER" id="PTHR18976">
    <property type="entry name" value="APOLIPOPROTEIN"/>
    <property type="match status" value="1"/>
</dbReference>
<dbReference type="PANTHER" id="PTHR18976:SF2">
    <property type="entry name" value="APOLIPOPROTEIN E"/>
    <property type="match status" value="1"/>
</dbReference>
<dbReference type="Pfam" id="PF01442">
    <property type="entry name" value="Apolipoprotein"/>
    <property type="match status" value="1"/>
</dbReference>
<dbReference type="SUPFAM" id="SSF58113">
    <property type="entry name" value="Apolipoprotein A-I"/>
    <property type="match status" value="1"/>
</dbReference>
<gene>
    <name type="primary">APOE</name>
</gene>
<accession>A0A2Y9GHM3</accession>
<name>APOE_NEOSC</name>
<comment type="function">
    <text evidence="1">APOE is an apolipoprotein, a protein associating with lipid particles, that mainly functions in lipoprotein-mediated lipid transport between organs via the plasma and interstitial fluids. APOE is a core component of plasma lipoproteins and is involved in their production, conversion and clearance. Apolipoproteins are amphipathic molecules that interact both with lipids of the lipoprotein particle core and the aqueous environment of the plasma. As such, APOE associates with chylomicrons, chylomicron remnants, very low density lipoproteins (VLDL) and intermediate density lipoproteins (IDL) but shows a preferential binding to high-density lipoproteins (HDL). It also binds a wide range of cellular receptors including the LDL receptor/LDLR, the LDL receptor-related proteins LRP1, LRP2 and LRP8 and the very low-density lipoprotein receptor/VLDLR that mediate the cellular uptake of the APOE-containing lipoprotein particles. Finally, APOE also has a heparin-binding activity and binds heparan-sulfate proteoglycans on the surface of cells, a property that supports the capture and the receptor-mediated uptake of APOE-containing lipoproteins by cells. A main function of APOE is to mediate lipoprotein clearance through the uptake of chylomicrons, VLDLs, and HDLs by hepatocytes. APOE is also involved in the biosynthesis by the liver of VLDLs as well as their uptake by peripheral tissues ensuring the delivery of triglycerides and energy storage in muscle, heart and adipose tissues. By participating in the lipoprotein-mediated distribution of lipids among tissues, APOE plays a critical role in plasma and tissues lipid homeostasis. APOE is also involved in two steps of reverse cholesterol transport, the HDLs-mediated transport of cholesterol from peripheral tissues to the liver, and thereby plays an important role in cholesterol homeostasis. First, it is functionally associated with ABCA1 in the biogenesis of HDLs in tissues. Second, it is enriched in circulating HDLs and mediates their uptake by hepatocytes. APOE also plays an important role in lipid transport in the central nervous system, regulating neuron survival and sprouting.</text>
</comment>
<comment type="subunit">
    <text evidence="1">Homotetramer. May interact with ABCA1; functionally associated with ABCA1 in the biogenesis of HDLs. May interact with APP/A4 amyloid-beta peptide; the interaction is extremely stable in vitro but its physiological significance is unclear. May interact with MAPT. May interact with MAP2. In the cerebrospinal fluid, interacts with secreted SORL1. Interacts with PMEL; this allows the loading of PMEL luminal fragment on ILVs to induce fibril nucleation.</text>
</comment>
<comment type="subcellular location">
    <subcellularLocation>
        <location evidence="1">Secreted</location>
    </subcellularLocation>
    <subcellularLocation>
        <location evidence="1">Secreted</location>
        <location evidence="1">Extracellular space</location>
    </subcellularLocation>
    <subcellularLocation>
        <location evidence="1">Secreted</location>
        <location evidence="1">Extracellular space</location>
        <location evidence="1">Extracellular matrix</location>
    </subcellularLocation>
    <subcellularLocation>
        <location evidence="1">Extracellular vesicle</location>
    </subcellularLocation>
    <subcellularLocation>
        <location evidence="1">Endosome</location>
        <location evidence="1">Multivesicular body</location>
    </subcellularLocation>
    <text evidence="1">In the plasma, APOE is associated with chylomicrons, chylomicrons remnants, VLDL, LDL and HDL lipoproteins. Lipid poor oligomeric APOE is associated with the extracellular matrix in a calcium- and heparan-sulfate proteoglycans-dependent manner. Lipidation induces the release from the extracellular matrix. Colocalizes with CD63 and PMEL at exosomes and in intraluminal vesicles within multivesicular endosomes.</text>
</comment>
<comment type="PTM">
    <text evidence="1">APOE exists as multiple glycosylated and sialylated glycoforms within cells and in plasma. The extent of glycosylation and sialylation are tissue and context specific.</text>
</comment>
<comment type="PTM">
    <text evidence="1">Glycated in plasma VLDL.</text>
</comment>
<comment type="PTM">
    <text evidence="1">Phosphorylated by FAM20C in the extracellular medium.</text>
</comment>
<comment type="similarity">
    <text evidence="5">Belongs to the apolipoprotein A1/A4/E family.</text>
</comment>
<proteinExistence type="inferred from homology"/>
<organism>
    <name type="scientific">Neomonachus schauinslandi</name>
    <name type="common">Hawaiian monk seal</name>
    <name type="synonym">Monachus schauinslandi</name>
    <dbReference type="NCBI Taxonomy" id="29088"/>
    <lineage>
        <taxon>Eukaryota</taxon>
        <taxon>Metazoa</taxon>
        <taxon>Chordata</taxon>
        <taxon>Craniata</taxon>
        <taxon>Vertebrata</taxon>
        <taxon>Euteleostomi</taxon>
        <taxon>Mammalia</taxon>
        <taxon>Eutheria</taxon>
        <taxon>Laurasiatheria</taxon>
        <taxon>Carnivora</taxon>
        <taxon>Caniformia</taxon>
        <taxon>Pinnipedia</taxon>
        <taxon>Phocidae</taxon>
        <taxon>Monachinae</taxon>
        <taxon>Monachini</taxon>
        <taxon>Neomonachus</taxon>
    </lineage>
</organism>
<protein>
    <recommendedName>
        <fullName>Apolipoprotein E</fullName>
        <shortName>Apo-E</shortName>
    </recommendedName>
</protein>
<feature type="signal peptide" evidence="3">
    <location>
        <begin position="1"/>
        <end position="18"/>
    </location>
</feature>
<feature type="chain" id="PRO_0000448370" description="Apolipoprotein E">
    <location>
        <begin position="19"/>
        <end position="330"/>
    </location>
</feature>
<feature type="repeat" description="1">
    <location>
        <begin position="96"/>
        <end position="117"/>
    </location>
</feature>
<feature type="repeat" description="2">
    <location>
        <begin position="118"/>
        <end position="139"/>
    </location>
</feature>
<feature type="repeat" description="3">
    <location>
        <begin position="140"/>
        <end position="161"/>
    </location>
</feature>
<feature type="repeat" description="4">
    <location>
        <begin position="162"/>
        <end position="183"/>
    </location>
</feature>
<feature type="repeat" description="5">
    <location>
        <begin position="184"/>
        <end position="205"/>
    </location>
</feature>
<feature type="repeat" description="6">
    <location>
        <begin position="206"/>
        <end position="227"/>
    </location>
</feature>
<feature type="repeat" description="7">
    <location>
        <begin position="247"/>
        <end position="268"/>
    </location>
</feature>
<feature type="region of interest" description="Disordered" evidence="4">
    <location>
        <begin position="21"/>
        <end position="43"/>
    </location>
</feature>
<feature type="region of interest" description="7 X 22 AA approximate tandem repeats">
    <location>
        <begin position="96"/>
        <end position="268"/>
    </location>
</feature>
<feature type="region of interest" description="LDL and other lipoprotein receptors binding" evidence="1">
    <location>
        <begin position="174"/>
        <end position="184"/>
    </location>
</feature>
<feature type="region of interest" description="Lipid-binding and lipoprotein association" evidence="1">
    <location>
        <begin position="226"/>
        <end position="303"/>
    </location>
</feature>
<feature type="region of interest" description="Homooligomerization" evidence="1">
    <location>
        <begin position="279"/>
        <end position="330"/>
    </location>
</feature>
<feature type="region of interest" description="Specificity for association with VLDL" evidence="1">
    <location>
        <begin position="291"/>
        <end position="303"/>
    </location>
</feature>
<feature type="binding site" evidence="1">
    <location>
        <begin position="178"/>
        <end position="181"/>
    </location>
    <ligand>
        <name>heparin</name>
        <dbReference type="ChEBI" id="CHEBI:28304"/>
    </ligand>
</feature>
<feature type="binding site" evidence="1">
    <location>
        <begin position="242"/>
        <end position="249"/>
    </location>
    <ligand>
        <name>heparin</name>
        <dbReference type="ChEBI" id="CHEBI:28304"/>
    </ligand>
</feature>
<feature type="modified residue" description="Methionine sulfoxide" evidence="2">
    <location>
        <position position="159"/>
    </location>
</feature>
<feature type="modified residue" description="Phosphoserine" evidence="1">
    <location>
        <position position="163"/>
    </location>
</feature>
<sequence>MKVLWAALVVALLAGCWADVEPESPLQGKPEPELEPELEPKRELEQEVEAEAGWQAGQPWELALARFWDYLRWVQTLSDQVQEDMLSNQVTQELTTLMEETMKEIKAYRAELEEQLGPMASETQARVAKELQAAQARLRSDMEDVRTRLTQYRGEVQAMLGQSTEELRARFASHMRKLRKRVLRDAEDLQKRLAVYRAGVREGAERSVSSIRERLWPLLEQARTRHANLATQPLRERVDALGQQLRGRLEEVGSRARSHLDEVREQMEEVQAKMEEQANQMRQQVEAFQARLKSWFEPLVEDMQRQWAGLVEKVQVAVGTSPTTPPLETK</sequence>
<reference key="1">
    <citation type="submission" date="2017-05" db="EMBL/GenBank/DDBJ databases">
        <title>Improved de novo genome assembly: linked-read sequencing combined with optical mapping produce a high quality mammalian genome at relatively low cost.</title>
        <authorList>
            <person name="Mohr D.W."/>
            <person name="Scott A.F."/>
        </authorList>
    </citation>
    <scope>NUCLEOTIDE SEQUENCE [LARGE SCALE GENOMIC DNA]</scope>
</reference>
<reference key="2">
    <citation type="unpublished observations" date="2019-08">
        <authorList>
            <person name="Puppione D.L."/>
        </authorList>
    </citation>
    <scope>IDENTIFICATION</scope>
</reference>
<evidence type="ECO:0000250" key="1">
    <source>
        <dbReference type="UniProtKB" id="P02649"/>
    </source>
</evidence>
<evidence type="ECO:0000250" key="2">
    <source>
        <dbReference type="UniProtKB" id="P08226"/>
    </source>
</evidence>
<evidence type="ECO:0000255" key="3"/>
<evidence type="ECO:0000256" key="4">
    <source>
        <dbReference type="SAM" id="MobiDB-lite"/>
    </source>
</evidence>
<evidence type="ECO:0000305" key="5"/>